<feature type="chain" id="PRO_1000184762" description="ATP synthase subunit delta">
    <location>
        <begin position="1"/>
        <end position="177"/>
    </location>
</feature>
<name>ATPD_PASMU</name>
<proteinExistence type="inferred from homology"/>
<accession>Q9CKW3</accession>
<evidence type="ECO:0000255" key="1">
    <source>
        <dbReference type="HAMAP-Rule" id="MF_01416"/>
    </source>
</evidence>
<keyword id="KW-0066">ATP synthesis</keyword>
<keyword id="KW-0997">Cell inner membrane</keyword>
<keyword id="KW-1003">Cell membrane</keyword>
<keyword id="KW-0139">CF(1)</keyword>
<keyword id="KW-0375">Hydrogen ion transport</keyword>
<keyword id="KW-0406">Ion transport</keyword>
<keyword id="KW-0472">Membrane</keyword>
<keyword id="KW-1185">Reference proteome</keyword>
<keyword id="KW-0813">Transport</keyword>
<reference key="1">
    <citation type="journal article" date="2001" name="Proc. Natl. Acad. Sci. U.S.A.">
        <title>Complete genomic sequence of Pasteurella multocida Pm70.</title>
        <authorList>
            <person name="May B.J."/>
            <person name="Zhang Q."/>
            <person name="Li L.L."/>
            <person name="Paustian M.L."/>
            <person name="Whittam T.S."/>
            <person name="Kapur V."/>
        </authorList>
    </citation>
    <scope>NUCLEOTIDE SEQUENCE [LARGE SCALE GENOMIC DNA]</scope>
    <source>
        <strain>Pm70</strain>
    </source>
</reference>
<gene>
    <name evidence="1" type="primary">atpH</name>
    <name type="ordered locus">PM1491</name>
</gene>
<comment type="function">
    <text evidence="1">F(1)F(0) ATP synthase produces ATP from ADP in the presence of a proton or sodium gradient. F-type ATPases consist of two structural domains, F(1) containing the extramembraneous catalytic core and F(0) containing the membrane proton channel, linked together by a central stalk and a peripheral stalk. During catalysis, ATP synthesis in the catalytic domain of F(1) is coupled via a rotary mechanism of the central stalk subunits to proton translocation.</text>
</comment>
<comment type="function">
    <text evidence="1">This protein is part of the stalk that links CF(0) to CF(1). It either transmits conformational changes from CF(0) to CF(1) or is implicated in proton conduction.</text>
</comment>
<comment type="subunit">
    <text evidence="1">F-type ATPases have 2 components, F(1) - the catalytic core - and F(0) - the membrane proton channel. F(1) has five subunits: alpha(3), beta(3), gamma(1), delta(1), epsilon(1). F(0) has three main subunits: a(1), b(2) and c(10-14). The alpha and beta chains form an alternating ring which encloses part of the gamma chain. F(1) is attached to F(0) by a central stalk formed by the gamma and epsilon chains, while a peripheral stalk is formed by the delta and b chains.</text>
</comment>
<comment type="subcellular location">
    <subcellularLocation>
        <location evidence="1">Cell inner membrane</location>
        <topology evidence="1">Peripheral membrane protein</topology>
    </subcellularLocation>
</comment>
<comment type="similarity">
    <text evidence="1">Belongs to the ATPase delta chain family.</text>
</comment>
<dbReference type="EMBL" id="AE004439">
    <property type="protein sequence ID" value="AAK03575.1"/>
    <property type="molecule type" value="Genomic_DNA"/>
</dbReference>
<dbReference type="RefSeq" id="WP_005755067.1">
    <property type="nucleotide sequence ID" value="NC_002663.1"/>
</dbReference>
<dbReference type="SMR" id="Q9CKW3"/>
<dbReference type="STRING" id="272843.PM1491"/>
<dbReference type="EnsemblBacteria" id="AAK03575">
    <property type="protein sequence ID" value="AAK03575"/>
    <property type="gene ID" value="PM1491"/>
</dbReference>
<dbReference type="KEGG" id="pmu:PM1491"/>
<dbReference type="PATRIC" id="fig|272843.6.peg.1506"/>
<dbReference type="HOGENOM" id="CLU_085114_3_0_6"/>
<dbReference type="OrthoDB" id="9816221at2"/>
<dbReference type="Proteomes" id="UP000000809">
    <property type="component" value="Chromosome"/>
</dbReference>
<dbReference type="GO" id="GO:0005886">
    <property type="term" value="C:plasma membrane"/>
    <property type="evidence" value="ECO:0007669"/>
    <property type="project" value="UniProtKB-SubCell"/>
</dbReference>
<dbReference type="GO" id="GO:0045259">
    <property type="term" value="C:proton-transporting ATP synthase complex"/>
    <property type="evidence" value="ECO:0007669"/>
    <property type="project" value="UniProtKB-KW"/>
</dbReference>
<dbReference type="GO" id="GO:0046933">
    <property type="term" value="F:proton-transporting ATP synthase activity, rotational mechanism"/>
    <property type="evidence" value="ECO:0007669"/>
    <property type="project" value="UniProtKB-UniRule"/>
</dbReference>
<dbReference type="Gene3D" id="1.10.520.20">
    <property type="entry name" value="N-terminal domain of the delta subunit of the F1F0-ATP synthase"/>
    <property type="match status" value="1"/>
</dbReference>
<dbReference type="HAMAP" id="MF_01416">
    <property type="entry name" value="ATP_synth_delta_bact"/>
    <property type="match status" value="1"/>
</dbReference>
<dbReference type="InterPro" id="IPR026015">
    <property type="entry name" value="ATP_synth_OSCP/delta_N_sf"/>
</dbReference>
<dbReference type="InterPro" id="IPR000711">
    <property type="entry name" value="ATPase_OSCP/dsu"/>
</dbReference>
<dbReference type="NCBIfam" id="TIGR01145">
    <property type="entry name" value="ATP_synt_delta"/>
    <property type="match status" value="1"/>
</dbReference>
<dbReference type="NCBIfam" id="NF004402">
    <property type="entry name" value="PRK05758.2-2"/>
    <property type="match status" value="1"/>
</dbReference>
<dbReference type="NCBIfam" id="NF004404">
    <property type="entry name" value="PRK05758.2-5"/>
    <property type="match status" value="1"/>
</dbReference>
<dbReference type="PANTHER" id="PTHR11910">
    <property type="entry name" value="ATP SYNTHASE DELTA CHAIN"/>
    <property type="match status" value="1"/>
</dbReference>
<dbReference type="Pfam" id="PF00213">
    <property type="entry name" value="OSCP"/>
    <property type="match status" value="1"/>
</dbReference>
<dbReference type="PRINTS" id="PR00125">
    <property type="entry name" value="ATPASEDELTA"/>
</dbReference>
<dbReference type="SUPFAM" id="SSF47928">
    <property type="entry name" value="N-terminal domain of the delta subunit of the F1F0-ATP synthase"/>
    <property type="match status" value="1"/>
</dbReference>
<sequence>MSELTTIARPYAKAAFDFAIEQNAVEKWANMLHFSSELIKDETMQTFLKSSLSASKLADTVISICGEQLDQYGQNLIRLMAENKRLEVLPAIYQAFQHYVEEHQKVAEVQVISAQPLNATQEQKIASAMEKRLARKVKLNCSLDSSLIAGVIIRTDDFVIDGSSRGQLSRLANELQL</sequence>
<protein>
    <recommendedName>
        <fullName evidence="1">ATP synthase subunit delta</fullName>
    </recommendedName>
    <alternativeName>
        <fullName evidence="1">ATP synthase F(1) sector subunit delta</fullName>
    </alternativeName>
    <alternativeName>
        <fullName evidence="1">F-type ATPase subunit delta</fullName>
        <shortName evidence="1">F-ATPase subunit delta</shortName>
    </alternativeName>
</protein>
<organism>
    <name type="scientific">Pasteurella multocida (strain Pm70)</name>
    <dbReference type="NCBI Taxonomy" id="272843"/>
    <lineage>
        <taxon>Bacteria</taxon>
        <taxon>Pseudomonadati</taxon>
        <taxon>Pseudomonadota</taxon>
        <taxon>Gammaproteobacteria</taxon>
        <taxon>Pasteurellales</taxon>
        <taxon>Pasteurellaceae</taxon>
        <taxon>Pasteurella</taxon>
    </lineage>
</organism>